<reference key="1">
    <citation type="journal article" date="1992" name="Nature">
        <title>The C. elegans genome sequencing project: a beginning.</title>
        <authorList>
            <person name="Sulston J."/>
            <person name="Du Z."/>
            <person name="Thomas K."/>
            <person name="Wilson R."/>
            <person name="Hillier L."/>
            <person name="Staden R."/>
            <person name="Halloran N."/>
            <person name="Green P."/>
            <person name="Thierry-Mieg J."/>
            <person name="Qiu L."/>
            <person name="Dear S."/>
            <person name="Coulson A."/>
            <person name="Craxton M."/>
            <person name="Durbin R."/>
            <person name="Berks M."/>
            <person name="Metzstein M."/>
            <person name="Hawkins T."/>
            <person name="Ainscough R."/>
            <person name="Waterston R."/>
        </authorList>
    </citation>
    <scope>NUCLEOTIDE SEQUENCE [LARGE SCALE GENOMIC DNA]</scope>
    <source>
        <strain>Bristol N2</strain>
    </source>
</reference>
<reference key="2">
    <citation type="journal article" date="1998" name="Science">
        <title>Genome sequence of the nematode C. elegans: a platform for investigating biology.</title>
        <authorList>
            <consortium name="The C. elegans sequencing consortium"/>
        </authorList>
    </citation>
    <scope>NUCLEOTIDE SEQUENCE [LARGE SCALE GENOMIC DNA]</scope>
    <source>
        <strain>Bristol N2</strain>
    </source>
</reference>
<reference key="3">
    <citation type="journal article" date="2013" name="Nat. Chem. Biol.">
        <title>Role of sirtuins in lifespan regulation is linked to methylation of nicotinamide.</title>
        <authorList>
            <person name="Schmeisser K."/>
            <person name="Mansfeld J."/>
            <person name="Kuhlow D."/>
            <person name="Weimer S."/>
            <person name="Priebe S."/>
            <person name="Heiland I."/>
            <person name="Birringer M."/>
            <person name="Groth M."/>
            <person name="Segref A."/>
            <person name="Kanfi Y."/>
            <person name="Price N.L."/>
            <person name="Schmeisser S."/>
            <person name="Schuster S."/>
            <person name="Pfeiffer A.F."/>
            <person name="Guthke R."/>
            <person name="Platzer M."/>
            <person name="Hoppe T."/>
            <person name="Cohen H.Y."/>
            <person name="Zarse K."/>
            <person name="Sinclair D.A."/>
            <person name="Ristow M."/>
        </authorList>
    </citation>
    <scope>FUNCTION</scope>
    <scope>DISRUPTION PHENOTYPE</scope>
</reference>
<accession>P34254</accession>
<comment type="function">
    <text evidence="1 2">Catalyzes the N-methylation of nicotinamide and other pyridines to form pyridinium ions (By similarity). Involved in regulation of lifespan extension downstream of the sirtuin sir-2.1, probably through its role in nicotinic acid metabolism (PubMed:24077178).</text>
</comment>
<comment type="catalytic activity">
    <reaction evidence="1">
        <text>nicotinamide + S-adenosyl-L-methionine = 1-methylnicotinamide + S-adenosyl-L-homocysteine</text>
        <dbReference type="Rhea" id="RHEA:23884"/>
        <dbReference type="ChEBI" id="CHEBI:16797"/>
        <dbReference type="ChEBI" id="CHEBI:17154"/>
        <dbReference type="ChEBI" id="CHEBI:57856"/>
        <dbReference type="ChEBI" id="CHEBI:59789"/>
        <dbReference type="EC" id="2.1.1.1"/>
    </reaction>
</comment>
<comment type="disruption phenotype">
    <text evidence="2">Suppressed lifespan extension when exposed to nicotinic acid and nicotinamide. Reduced reactive oxygen species levels when exposed to nicotinic acid.</text>
</comment>
<comment type="similarity">
    <text evidence="3">Belongs to the class I-like SAM-binding methyltransferase superfamily. NNMT/PNMT/TEMT family.</text>
</comment>
<gene>
    <name evidence="4" type="primary">anmt-1</name>
    <name evidence="4" type="ORF">B0303.2</name>
</gene>
<dbReference type="EC" id="2.1.1.1" evidence="1"/>
<dbReference type="EMBL" id="FO080163">
    <property type="protein sequence ID" value="CCD61707.1"/>
    <property type="molecule type" value="Genomic_DNA"/>
</dbReference>
<dbReference type="PIR" id="S27784">
    <property type="entry name" value="S27784"/>
</dbReference>
<dbReference type="RefSeq" id="NP_498914.1">
    <property type="nucleotide sequence ID" value="NM_066513.7"/>
</dbReference>
<dbReference type="SMR" id="P34254"/>
<dbReference type="BioGRID" id="41420">
    <property type="interactions" value="3"/>
</dbReference>
<dbReference type="FunCoup" id="P34254">
    <property type="interactions" value="38"/>
</dbReference>
<dbReference type="STRING" id="6239.B0303.2.1"/>
<dbReference type="PaxDb" id="6239-B0303.2"/>
<dbReference type="PeptideAtlas" id="P34254"/>
<dbReference type="EnsemblMetazoa" id="B0303.2.1">
    <property type="protein sequence ID" value="B0303.2.1"/>
    <property type="gene ID" value="WBGene00015124"/>
</dbReference>
<dbReference type="EnsemblMetazoa" id="B0303.2.2">
    <property type="protein sequence ID" value="B0303.2.2"/>
    <property type="gene ID" value="WBGene00015124"/>
</dbReference>
<dbReference type="GeneID" id="176217"/>
<dbReference type="KEGG" id="cel:CELE_B0303.2"/>
<dbReference type="UCSC" id="B0303.2">
    <property type="organism name" value="c. elegans"/>
</dbReference>
<dbReference type="AGR" id="WB:WBGene00015124"/>
<dbReference type="CTD" id="176217"/>
<dbReference type="WormBase" id="B0303.2">
    <property type="protein sequence ID" value="CE00536"/>
    <property type="gene ID" value="WBGene00015124"/>
    <property type="gene designation" value="anmt-1"/>
</dbReference>
<dbReference type="eggNOG" id="ENOG502RY9W">
    <property type="taxonomic scope" value="Eukaryota"/>
</dbReference>
<dbReference type="GeneTree" id="ENSGT00390000011708"/>
<dbReference type="HOGENOM" id="CLU_082526_0_0_1"/>
<dbReference type="InParanoid" id="P34254"/>
<dbReference type="OMA" id="CLEYSCE"/>
<dbReference type="OrthoDB" id="10050085at2759"/>
<dbReference type="PhylomeDB" id="P34254"/>
<dbReference type="BRENDA" id="2.1.1.1">
    <property type="organism ID" value="1045"/>
</dbReference>
<dbReference type="Reactome" id="R-CEL-156581">
    <property type="pathway name" value="Methylation"/>
</dbReference>
<dbReference type="Reactome" id="R-CEL-197264">
    <property type="pathway name" value="Nicotinamide salvaging"/>
</dbReference>
<dbReference type="Reactome" id="R-CEL-209905">
    <property type="pathway name" value="Catecholamine biosynthesis"/>
</dbReference>
<dbReference type="PRO" id="PR:P34254"/>
<dbReference type="Proteomes" id="UP000001940">
    <property type="component" value="Chromosome III"/>
</dbReference>
<dbReference type="Bgee" id="WBGene00015124">
    <property type="expression patterns" value="Expressed in pharyngeal muscle cell (C elegans) and 4 other cell types or tissues"/>
</dbReference>
<dbReference type="GO" id="GO:0005829">
    <property type="term" value="C:cytosol"/>
    <property type="evidence" value="ECO:0000318"/>
    <property type="project" value="GO_Central"/>
</dbReference>
<dbReference type="GO" id="GO:0055120">
    <property type="term" value="C:striated muscle dense body"/>
    <property type="evidence" value="ECO:0007005"/>
    <property type="project" value="WormBase"/>
</dbReference>
<dbReference type="GO" id="GO:0005863">
    <property type="term" value="C:striated muscle myosin thick filament"/>
    <property type="evidence" value="ECO:0007005"/>
    <property type="project" value="WormBase"/>
</dbReference>
<dbReference type="GO" id="GO:0008170">
    <property type="term" value="F:N-methyltransferase activity"/>
    <property type="evidence" value="ECO:0000318"/>
    <property type="project" value="GO_Central"/>
</dbReference>
<dbReference type="GO" id="GO:0008112">
    <property type="term" value="F:nicotinamide N-methyltransferase activity"/>
    <property type="evidence" value="ECO:0007669"/>
    <property type="project" value="UniProtKB-EC"/>
</dbReference>
<dbReference type="GO" id="GO:0032259">
    <property type="term" value="P:methylation"/>
    <property type="evidence" value="ECO:0007669"/>
    <property type="project" value="UniProtKB-KW"/>
</dbReference>
<dbReference type="FunFam" id="3.40.50.150:FF:000820">
    <property type="entry name" value="Nicotinamide N-methyltransferase"/>
    <property type="match status" value="1"/>
</dbReference>
<dbReference type="Gene3D" id="3.40.50.150">
    <property type="entry name" value="Vaccinia Virus protein VP39"/>
    <property type="match status" value="1"/>
</dbReference>
<dbReference type="InterPro" id="IPR000940">
    <property type="entry name" value="NNMT_TEMT_trans"/>
</dbReference>
<dbReference type="InterPro" id="IPR029063">
    <property type="entry name" value="SAM-dependent_MTases_sf"/>
</dbReference>
<dbReference type="PANTHER" id="PTHR10867:SF17">
    <property type="entry name" value="NICOTINAMIDE N-METHYLTRANSFERASE"/>
    <property type="match status" value="1"/>
</dbReference>
<dbReference type="PANTHER" id="PTHR10867">
    <property type="entry name" value="NNMT/PNMT/TEMT FAMILY MEMBER"/>
    <property type="match status" value="1"/>
</dbReference>
<dbReference type="Pfam" id="PF01234">
    <property type="entry name" value="NNMT_PNMT_TEMT"/>
    <property type="match status" value="1"/>
</dbReference>
<dbReference type="PIRSF" id="PIRSF000384">
    <property type="entry name" value="PNMTase"/>
    <property type="match status" value="1"/>
</dbReference>
<dbReference type="SUPFAM" id="SSF53335">
    <property type="entry name" value="S-adenosyl-L-methionine-dependent methyltransferases"/>
    <property type="match status" value="1"/>
</dbReference>
<dbReference type="PROSITE" id="PS51681">
    <property type="entry name" value="SAM_MT_NNMT_PNMT_TEMT"/>
    <property type="match status" value="1"/>
</dbReference>
<organism>
    <name type="scientific">Caenorhabditis elegans</name>
    <dbReference type="NCBI Taxonomy" id="6239"/>
    <lineage>
        <taxon>Eukaryota</taxon>
        <taxon>Metazoa</taxon>
        <taxon>Ecdysozoa</taxon>
        <taxon>Nematoda</taxon>
        <taxon>Chromadorea</taxon>
        <taxon>Rhabditida</taxon>
        <taxon>Rhabditina</taxon>
        <taxon>Rhabditomorpha</taxon>
        <taxon>Rhabditoidea</taxon>
        <taxon>Rhabditidae</taxon>
        <taxon>Peloderinae</taxon>
        <taxon>Caenorhabditis</taxon>
    </lineage>
</organism>
<evidence type="ECO:0000250" key="1">
    <source>
        <dbReference type="UniProtKB" id="P40261"/>
    </source>
</evidence>
<evidence type="ECO:0000269" key="2">
    <source>
    </source>
</evidence>
<evidence type="ECO:0000305" key="3"/>
<evidence type="ECO:0000312" key="4">
    <source>
        <dbReference type="WormBase" id="B0303.2"/>
    </source>
</evidence>
<name>NNMT1_CAEEL</name>
<protein>
    <recommendedName>
        <fullName evidence="1">Nicotinamide N-methyltransferase</fullName>
        <ecNumber evidence="1">2.1.1.1</ecNumber>
    </recommendedName>
</protein>
<keyword id="KW-0489">Methyltransferase</keyword>
<keyword id="KW-1185">Reference proteome</keyword>
<keyword id="KW-0949">S-adenosyl-L-methionine</keyword>
<keyword id="KW-0808">Transferase</keyword>
<feature type="chain" id="PRO_0000159716" description="Nicotinamide N-methyltransferase" evidence="3">
    <location>
        <begin position="1"/>
        <end position="273"/>
    </location>
</feature>
<feature type="binding site" evidence="1">
    <location>
        <position position="35"/>
    </location>
    <ligand>
        <name>S-adenosyl-L-methionine</name>
        <dbReference type="ChEBI" id="CHEBI:59789"/>
    </ligand>
</feature>
<feature type="binding site" evidence="1">
    <location>
        <position position="40"/>
    </location>
    <ligand>
        <name>S-adenosyl-L-methionine</name>
        <dbReference type="ChEBI" id="CHEBI:59789"/>
    </ligand>
</feature>
<feature type="binding site" evidence="1">
    <location>
        <begin position="74"/>
        <end position="75"/>
    </location>
    <ligand>
        <name>S-adenosyl-L-methionine</name>
        <dbReference type="ChEBI" id="CHEBI:59789"/>
    </ligand>
</feature>
<feature type="binding site" evidence="1">
    <location>
        <position position="80"/>
    </location>
    <ligand>
        <name>S-adenosyl-L-methionine</name>
        <dbReference type="ChEBI" id="CHEBI:59789"/>
    </ligand>
</feature>
<feature type="binding site" evidence="1">
    <location>
        <position position="96"/>
    </location>
    <ligand>
        <name>S-adenosyl-L-methionine</name>
        <dbReference type="ChEBI" id="CHEBI:59789"/>
    </ligand>
</feature>
<feature type="binding site" evidence="1">
    <location>
        <position position="101"/>
    </location>
    <ligand>
        <name>S-adenosyl-L-methionine</name>
        <dbReference type="ChEBI" id="CHEBI:59789"/>
    </ligand>
</feature>
<feature type="binding site" evidence="1">
    <location>
        <begin position="152"/>
        <end position="153"/>
    </location>
    <ligand>
        <name>S-adenosyl-L-methionine</name>
        <dbReference type="ChEBI" id="CHEBI:59789"/>
    </ligand>
</feature>
<sequence>MTGTTENDNTGEDEKPKDEECAAIEHKDKFNPTAYLNSFYKTASEDTAMQIVLFFLPGILYRLPQKVRSVLDLGAGPTVYLPISLRDRAENIYTSDYAPANRDTLINWIEDKSDFDWDNVCSWIANIEASMETGKQMQNKTRKLMRAVLDVNVHESPVVQSIVWKENEQVQVPDKFQVVSTVFCLEYSCETLEAYFRAVRSACSLIDEGGILIQGGVLDATTYNFGGKTFRCHRLKQAHIIESLKANGMATTAEQGYKFITHDDIFLLVSKKL</sequence>
<proteinExistence type="inferred from homology"/>